<comment type="function">
    <text evidence="1">Aspartyl-tRNA synthetase with relaxed tRNA specificity since it is able to aspartylate not only its cognate tRNA(Asp) but also tRNA(Asn). Reaction proceeds in two steps: L-aspartate is first activated by ATP to form Asp-AMP and then transferred to the acceptor end of tRNA(Asp/Asn).</text>
</comment>
<comment type="catalytic activity">
    <reaction evidence="1">
        <text>tRNA(Asx) + L-aspartate + ATP = L-aspartyl-tRNA(Asx) + AMP + diphosphate</text>
        <dbReference type="Rhea" id="RHEA:18349"/>
        <dbReference type="Rhea" id="RHEA-COMP:9710"/>
        <dbReference type="Rhea" id="RHEA-COMP:9711"/>
        <dbReference type="ChEBI" id="CHEBI:29991"/>
        <dbReference type="ChEBI" id="CHEBI:30616"/>
        <dbReference type="ChEBI" id="CHEBI:33019"/>
        <dbReference type="ChEBI" id="CHEBI:78442"/>
        <dbReference type="ChEBI" id="CHEBI:78516"/>
        <dbReference type="ChEBI" id="CHEBI:456215"/>
        <dbReference type="EC" id="6.1.1.23"/>
    </reaction>
</comment>
<comment type="subunit">
    <text evidence="1">Homodimer.</text>
</comment>
<comment type="subcellular location">
    <subcellularLocation>
        <location evidence="1">Cytoplasm</location>
    </subcellularLocation>
</comment>
<comment type="similarity">
    <text evidence="1">Belongs to the class-II aminoacyl-tRNA synthetase family. Type 1 subfamily.</text>
</comment>
<sequence>MYRSHTCGELRPAHAGQEVTLAGWVHRRRDHGDLIFIDLRDRYGITQVVFNSAHPTAHEVAETVRSEYVLQVRGKVRIRPPEAVNPDLATGEIELEASEAQVLNPARTPPIYIAKEGGEDESVRLKYRYLDLRRERMQRNLILRHRVVKFIRDFLDAEGFLEIETPILIKSTPEGARDYLVPSRLHPGKFYALPQSPQQLKQLLMVAGYDKYFQIARCFRDEDQRADRQPEFTQLDMEMSFVDQDDVLDLIERMFTALCRTVVPHKHLPTPFRRLSYAEAMERYGSDKPDLRYGLELVNLSDLLIETPFQVFRNVLNSGGQVKGIRAPGCAHFSRKQIDELTDVVRAGGAKGLAWAVLPTDGGEVRSSFAKNLAPGEFAAIVERMQAEAGDLLLIVADQPAVVAASLDKLRRNLAERLQLADPNTLCFAWIVDFPLVEWNEDEQRWDAVHHPFTAPKDEDMHLLATDPGKVRAKAYDLILNGYEAGGGSIRIHRRDVQQQIFSLLGISEELAQAQFGHMLEAFEYGAPPHGGIAPGIDRLVMILADEPTIREVMAFPKTQQAVDLMTNAPSPVDERQLKELHIRIVMPE</sequence>
<proteinExistence type="inferred from homology"/>
<dbReference type="EC" id="6.1.1.23" evidence="1"/>
<dbReference type="EMBL" id="CP000909">
    <property type="protein sequence ID" value="ABY35529.1"/>
    <property type="molecule type" value="Genomic_DNA"/>
</dbReference>
<dbReference type="RefSeq" id="WP_012258183.1">
    <property type="nucleotide sequence ID" value="NC_010175.1"/>
</dbReference>
<dbReference type="RefSeq" id="YP_001635918.1">
    <property type="nucleotide sequence ID" value="NC_010175.1"/>
</dbReference>
<dbReference type="SMR" id="A9WGJ7"/>
<dbReference type="FunCoup" id="A9WGJ7">
    <property type="interactions" value="483"/>
</dbReference>
<dbReference type="STRING" id="324602.Caur_2320"/>
<dbReference type="EnsemblBacteria" id="ABY35529">
    <property type="protein sequence ID" value="ABY35529"/>
    <property type="gene ID" value="Caur_2320"/>
</dbReference>
<dbReference type="KEGG" id="cau:Caur_2320"/>
<dbReference type="PATRIC" id="fig|324602.8.peg.2627"/>
<dbReference type="eggNOG" id="COG0173">
    <property type="taxonomic scope" value="Bacteria"/>
</dbReference>
<dbReference type="HOGENOM" id="CLU_014330_3_2_0"/>
<dbReference type="InParanoid" id="A9WGJ7"/>
<dbReference type="Proteomes" id="UP000002008">
    <property type="component" value="Chromosome"/>
</dbReference>
<dbReference type="GO" id="GO:0005737">
    <property type="term" value="C:cytoplasm"/>
    <property type="evidence" value="ECO:0007669"/>
    <property type="project" value="UniProtKB-SubCell"/>
</dbReference>
<dbReference type="GO" id="GO:0004815">
    <property type="term" value="F:aspartate-tRNA ligase activity"/>
    <property type="evidence" value="ECO:0000318"/>
    <property type="project" value="GO_Central"/>
</dbReference>
<dbReference type="GO" id="GO:0050560">
    <property type="term" value="F:aspartate-tRNA(Asn) ligase activity"/>
    <property type="evidence" value="ECO:0007669"/>
    <property type="project" value="UniProtKB-EC"/>
</dbReference>
<dbReference type="GO" id="GO:0005524">
    <property type="term" value="F:ATP binding"/>
    <property type="evidence" value="ECO:0007669"/>
    <property type="project" value="UniProtKB-UniRule"/>
</dbReference>
<dbReference type="GO" id="GO:0003676">
    <property type="term" value="F:nucleic acid binding"/>
    <property type="evidence" value="ECO:0007669"/>
    <property type="project" value="InterPro"/>
</dbReference>
<dbReference type="GO" id="GO:0006422">
    <property type="term" value="P:aspartyl-tRNA aminoacylation"/>
    <property type="evidence" value="ECO:0000318"/>
    <property type="project" value="GO_Central"/>
</dbReference>
<dbReference type="CDD" id="cd00777">
    <property type="entry name" value="AspRS_core"/>
    <property type="match status" value="1"/>
</dbReference>
<dbReference type="CDD" id="cd04317">
    <property type="entry name" value="EcAspRS_like_N"/>
    <property type="match status" value="1"/>
</dbReference>
<dbReference type="Gene3D" id="3.30.930.10">
    <property type="entry name" value="Bira Bifunctional Protein, Domain 2"/>
    <property type="match status" value="1"/>
</dbReference>
<dbReference type="Gene3D" id="3.30.1360.30">
    <property type="entry name" value="GAD-like domain"/>
    <property type="match status" value="1"/>
</dbReference>
<dbReference type="Gene3D" id="2.40.50.140">
    <property type="entry name" value="Nucleic acid-binding proteins"/>
    <property type="match status" value="1"/>
</dbReference>
<dbReference type="HAMAP" id="MF_00044">
    <property type="entry name" value="Asp_tRNA_synth_type1"/>
    <property type="match status" value="1"/>
</dbReference>
<dbReference type="InterPro" id="IPR004364">
    <property type="entry name" value="Aa-tRNA-synt_II"/>
</dbReference>
<dbReference type="InterPro" id="IPR006195">
    <property type="entry name" value="aa-tRNA-synth_II"/>
</dbReference>
<dbReference type="InterPro" id="IPR045864">
    <property type="entry name" value="aa-tRNA-synth_II/BPL/LPL"/>
</dbReference>
<dbReference type="InterPro" id="IPR004524">
    <property type="entry name" value="Asp-tRNA-ligase_1"/>
</dbReference>
<dbReference type="InterPro" id="IPR047089">
    <property type="entry name" value="Asp-tRNA-ligase_1_N"/>
</dbReference>
<dbReference type="InterPro" id="IPR002312">
    <property type="entry name" value="Asp/Asn-tRNA-synth_IIb"/>
</dbReference>
<dbReference type="InterPro" id="IPR047090">
    <property type="entry name" value="AspRS_core"/>
</dbReference>
<dbReference type="InterPro" id="IPR004115">
    <property type="entry name" value="GAD-like_sf"/>
</dbReference>
<dbReference type="InterPro" id="IPR029351">
    <property type="entry name" value="GAD_dom"/>
</dbReference>
<dbReference type="InterPro" id="IPR012340">
    <property type="entry name" value="NA-bd_OB-fold"/>
</dbReference>
<dbReference type="InterPro" id="IPR004365">
    <property type="entry name" value="NA-bd_OB_tRNA"/>
</dbReference>
<dbReference type="NCBIfam" id="TIGR00459">
    <property type="entry name" value="aspS_bact"/>
    <property type="match status" value="1"/>
</dbReference>
<dbReference type="NCBIfam" id="NF001750">
    <property type="entry name" value="PRK00476.1"/>
    <property type="match status" value="1"/>
</dbReference>
<dbReference type="PANTHER" id="PTHR22594:SF5">
    <property type="entry name" value="ASPARTATE--TRNA LIGASE, MITOCHONDRIAL"/>
    <property type="match status" value="1"/>
</dbReference>
<dbReference type="PANTHER" id="PTHR22594">
    <property type="entry name" value="ASPARTYL/LYSYL-TRNA SYNTHETASE"/>
    <property type="match status" value="1"/>
</dbReference>
<dbReference type="Pfam" id="PF02938">
    <property type="entry name" value="GAD"/>
    <property type="match status" value="1"/>
</dbReference>
<dbReference type="Pfam" id="PF00152">
    <property type="entry name" value="tRNA-synt_2"/>
    <property type="match status" value="1"/>
</dbReference>
<dbReference type="Pfam" id="PF01336">
    <property type="entry name" value="tRNA_anti-codon"/>
    <property type="match status" value="1"/>
</dbReference>
<dbReference type="PRINTS" id="PR01042">
    <property type="entry name" value="TRNASYNTHASP"/>
</dbReference>
<dbReference type="SUPFAM" id="SSF55681">
    <property type="entry name" value="Class II aaRS and biotin synthetases"/>
    <property type="match status" value="1"/>
</dbReference>
<dbReference type="SUPFAM" id="SSF55261">
    <property type="entry name" value="GAD domain-like"/>
    <property type="match status" value="1"/>
</dbReference>
<dbReference type="SUPFAM" id="SSF50249">
    <property type="entry name" value="Nucleic acid-binding proteins"/>
    <property type="match status" value="1"/>
</dbReference>
<dbReference type="PROSITE" id="PS50862">
    <property type="entry name" value="AA_TRNA_LIGASE_II"/>
    <property type="match status" value="1"/>
</dbReference>
<gene>
    <name evidence="1" type="primary">aspS</name>
    <name type="ordered locus">Caur_2320</name>
</gene>
<accession>A9WGJ7</accession>
<keyword id="KW-0030">Aminoacyl-tRNA synthetase</keyword>
<keyword id="KW-0067">ATP-binding</keyword>
<keyword id="KW-0963">Cytoplasm</keyword>
<keyword id="KW-0436">Ligase</keyword>
<keyword id="KW-0547">Nucleotide-binding</keyword>
<keyword id="KW-0648">Protein biosynthesis</keyword>
<keyword id="KW-1185">Reference proteome</keyword>
<reference key="1">
    <citation type="journal article" date="2011" name="BMC Genomics">
        <title>Complete genome sequence of the filamentous anoxygenic phototrophic bacterium Chloroflexus aurantiacus.</title>
        <authorList>
            <person name="Tang K.H."/>
            <person name="Barry K."/>
            <person name="Chertkov O."/>
            <person name="Dalin E."/>
            <person name="Han C.S."/>
            <person name="Hauser L.J."/>
            <person name="Honchak B.M."/>
            <person name="Karbach L.E."/>
            <person name="Land M.L."/>
            <person name="Lapidus A."/>
            <person name="Larimer F.W."/>
            <person name="Mikhailova N."/>
            <person name="Pitluck S."/>
            <person name="Pierson B.K."/>
            <person name="Blankenship R.E."/>
        </authorList>
    </citation>
    <scope>NUCLEOTIDE SEQUENCE [LARGE SCALE GENOMIC DNA]</scope>
    <source>
        <strain>ATCC 29366 / DSM 635 / J-10-fl</strain>
    </source>
</reference>
<protein>
    <recommendedName>
        <fullName evidence="1">Aspartate--tRNA(Asp/Asn) ligase</fullName>
        <ecNumber evidence="1">6.1.1.23</ecNumber>
    </recommendedName>
    <alternativeName>
        <fullName evidence="1">Aspartyl-tRNA synthetase</fullName>
        <shortName evidence="1">AspRS</shortName>
    </alternativeName>
    <alternativeName>
        <fullName evidence="1">Non-discriminating aspartyl-tRNA synthetase</fullName>
        <shortName evidence="1">ND-AspRS</shortName>
    </alternativeName>
</protein>
<organism>
    <name type="scientific">Chloroflexus aurantiacus (strain ATCC 29366 / DSM 635 / J-10-fl)</name>
    <dbReference type="NCBI Taxonomy" id="324602"/>
    <lineage>
        <taxon>Bacteria</taxon>
        <taxon>Bacillati</taxon>
        <taxon>Chloroflexota</taxon>
        <taxon>Chloroflexia</taxon>
        <taxon>Chloroflexales</taxon>
        <taxon>Chloroflexineae</taxon>
        <taxon>Chloroflexaceae</taxon>
        <taxon>Chloroflexus</taxon>
    </lineage>
</organism>
<feature type="chain" id="PRO_1000090974" description="Aspartate--tRNA(Asp/Asn) ligase">
    <location>
        <begin position="1"/>
        <end position="589"/>
    </location>
</feature>
<feature type="region of interest" description="Aspartate" evidence="1">
    <location>
        <begin position="198"/>
        <end position="201"/>
    </location>
</feature>
<feature type="binding site" evidence="1">
    <location>
        <position position="174"/>
    </location>
    <ligand>
        <name>L-aspartate</name>
        <dbReference type="ChEBI" id="CHEBI:29991"/>
    </ligand>
</feature>
<feature type="binding site" evidence="1">
    <location>
        <begin position="220"/>
        <end position="222"/>
    </location>
    <ligand>
        <name>ATP</name>
        <dbReference type="ChEBI" id="CHEBI:30616"/>
    </ligand>
</feature>
<feature type="binding site" evidence="1">
    <location>
        <position position="220"/>
    </location>
    <ligand>
        <name>L-aspartate</name>
        <dbReference type="ChEBI" id="CHEBI:29991"/>
    </ligand>
</feature>
<feature type="binding site" evidence="1">
    <location>
        <position position="229"/>
    </location>
    <ligand>
        <name>ATP</name>
        <dbReference type="ChEBI" id="CHEBI:30616"/>
    </ligand>
</feature>
<feature type="binding site" evidence="1">
    <location>
        <position position="450"/>
    </location>
    <ligand>
        <name>L-aspartate</name>
        <dbReference type="ChEBI" id="CHEBI:29991"/>
    </ligand>
</feature>
<feature type="binding site" evidence="1">
    <location>
        <position position="484"/>
    </location>
    <ligand>
        <name>ATP</name>
        <dbReference type="ChEBI" id="CHEBI:30616"/>
    </ligand>
</feature>
<feature type="binding site" evidence="1">
    <location>
        <position position="491"/>
    </location>
    <ligand>
        <name>L-aspartate</name>
        <dbReference type="ChEBI" id="CHEBI:29991"/>
    </ligand>
</feature>
<feature type="binding site" evidence="1">
    <location>
        <begin position="536"/>
        <end position="539"/>
    </location>
    <ligand>
        <name>ATP</name>
        <dbReference type="ChEBI" id="CHEBI:30616"/>
    </ligand>
</feature>
<feature type="site" description="Important for tRNA non-discrimination" evidence="1">
    <location>
        <position position="31"/>
    </location>
</feature>
<evidence type="ECO:0000255" key="1">
    <source>
        <dbReference type="HAMAP-Rule" id="MF_00044"/>
    </source>
</evidence>
<name>SYDND_CHLAA</name>